<comment type="function">
    <text evidence="1">Involved in peptide bond synthesis. Alleviates ribosome stalling that occurs when 3 or more consecutive Pro residues or the sequence PPG is present in a protein, possibly by augmenting the peptidyl transferase activity of the ribosome. Modification of Lys-34 is required for alleviation.</text>
</comment>
<comment type="pathway">
    <text evidence="1">Protein biosynthesis; polypeptide chain elongation.</text>
</comment>
<comment type="subcellular location">
    <subcellularLocation>
        <location evidence="1">Cytoplasm</location>
    </subcellularLocation>
</comment>
<comment type="PTM">
    <text evidence="1">Is beta-lysylated on the epsilon-amino group of Lys-34 by the combined action of EpmA and EpmB, and then hydroxylated on the C5 position of the same residue by EpmC. Lysylation is critical for the stimulatory effect of EF-P on peptide-bond formation. The lysylation moiety would extend toward the peptidyltransferase center and stabilize the terminal 3-CCA end of the tRNA. The hydroxylation of the C5 position on Lys-34 would allow additional potential stabilizing hydrogen-bond interactions with the P-tRNA.</text>
</comment>
<comment type="similarity">
    <text evidence="1">Belongs to the elongation factor P family.</text>
</comment>
<reference key="1">
    <citation type="journal article" date="2008" name="J. Bacteriol.">
        <title>The complete genome sequence of Escherichia coli DH10B: insights into the biology of a laboratory workhorse.</title>
        <authorList>
            <person name="Durfee T."/>
            <person name="Nelson R."/>
            <person name="Baldwin S."/>
            <person name="Plunkett G. III"/>
            <person name="Burland V."/>
            <person name="Mau B."/>
            <person name="Petrosino J.F."/>
            <person name="Qin X."/>
            <person name="Muzny D.M."/>
            <person name="Ayele M."/>
            <person name="Gibbs R.A."/>
            <person name="Csorgo B."/>
            <person name="Posfai G."/>
            <person name="Weinstock G.M."/>
            <person name="Blattner F.R."/>
        </authorList>
    </citation>
    <scope>NUCLEOTIDE SEQUENCE [LARGE SCALE GENOMIC DNA]</scope>
    <source>
        <strain>K12 / DH10B</strain>
    </source>
</reference>
<keyword id="KW-0963">Cytoplasm</keyword>
<keyword id="KW-0251">Elongation factor</keyword>
<keyword id="KW-0379">Hydroxylation</keyword>
<keyword id="KW-0648">Protein biosynthesis</keyword>
<gene>
    <name evidence="1" type="primary">efp</name>
    <name type="ordered locus">ECDH10B_4340</name>
</gene>
<sequence>MATYYSNDFRAGLKIMLDGEPYAVEASEFVKPGKGQAFARVKLRRLLTGTRVEKTFKSTDSAEGADVVDMNLTYLYNDGEFWHFMNNETFEQLSADAKAIGDNAKWLLDQAECIVTLWNGQPISVTPPNFVELEIVDTDPGLKGDTAGTGGKPATLSTGAVVKVPLFVQIGEVIKVDTRSGEYVSRVK</sequence>
<evidence type="ECO:0000255" key="1">
    <source>
        <dbReference type="HAMAP-Rule" id="MF_00141"/>
    </source>
</evidence>
<organism>
    <name type="scientific">Escherichia coli (strain K12 / DH10B)</name>
    <dbReference type="NCBI Taxonomy" id="316385"/>
    <lineage>
        <taxon>Bacteria</taxon>
        <taxon>Pseudomonadati</taxon>
        <taxon>Pseudomonadota</taxon>
        <taxon>Gammaproteobacteria</taxon>
        <taxon>Enterobacterales</taxon>
        <taxon>Enterobacteriaceae</taxon>
        <taxon>Escherichia</taxon>
    </lineage>
</organism>
<proteinExistence type="inferred from homology"/>
<name>EFP_ECODH</name>
<dbReference type="EMBL" id="CP000948">
    <property type="protein sequence ID" value="ACB05137.1"/>
    <property type="molecule type" value="Genomic_DNA"/>
</dbReference>
<dbReference type="RefSeq" id="WP_000257278.1">
    <property type="nucleotide sequence ID" value="NC_010473.1"/>
</dbReference>
<dbReference type="SMR" id="B1XDQ0"/>
<dbReference type="GeneID" id="93777677"/>
<dbReference type="KEGG" id="ecd:ECDH10B_4340"/>
<dbReference type="HOGENOM" id="CLU_074944_0_0_6"/>
<dbReference type="UniPathway" id="UPA00345"/>
<dbReference type="GO" id="GO:0005829">
    <property type="term" value="C:cytosol"/>
    <property type="evidence" value="ECO:0007669"/>
    <property type="project" value="UniProtKB-ARBA"/>
</dbReference>
<dbReference type="GO" id="GO:0003746">
    <property type="term" value="F:translation elongation factor activity"/>
    <property type="evidence" value="ECO:0007669"/>
    <property type="project" value="UniProtKB-UniRule"/>
</dbReference>
<dbReference type="GO" id="GO:0043043">
    <property type="term" value="P:peptide biosynthetic process"/>
    <property type="evidence" value="ECO:0007669"/>
    <property type="project" value="InterPro"/>
</dbReference>
<dbReference type="CDD" id="cd04470">
    <property type="entry name" value="S1_EF-P_repeat_1"/>
    <property type="match status" value="1"/>
</dbReference>
<dbReference type="CDD" id="cd05794">
    <property type="entry name" value="S1_EF-P_repeat_2"/>
    <property type="match status" value="1"/>
</dbReference>
<dbReference type="FunFam" id="2.30.30.30:FF:000003">
    <property type="entry name" value="Elongation factor P"/>
    <property type="match status" value="1"/>
</dbReference>
<dbReference type="FunFam" id="2.40.50.140:FF:000004">
    <property type="entry name" value="Elongation factor P"/>
    <property type="match status" value="1"/>
</dbReference>
<dbReference type="FunFam" id="2.40.50.140:FF:000009">
    <property type="entry name" value="Elongation factor P"/>
    <property type="match status" value="1"/>
</dbReference>
<dbReference type="Gene3D" id="2.30.30.30">
    <property type="match status" value="1"/>
</dbReference>
<dbReference type="Gene3D" id="2.40.50.140">
    <property type="entry name" value="Nucleic acid-binding proteins"/>
    <property type="match status" value="2"/>
</dbReference>
<dbReference type="HAMAP" id="MF_00141">
    <property type="entry name" value="EF_P"/>
    <property type="match status" value="1"/>
</dbReference>
<dbReference type="InterPro" id="IPR015365">
    <property type="entry name" value="Elong-fact-P_C"/>
</dbReference>
<dbReference type="InterPro" id="IPR012340">
    <property type="entry name" value="NA-bd_OB-fold"/>
</dbReference>
<dbReference type="InterPro" id="IPR014722">
    <property type="entry name" value="Rib_uL2_dom2"/>
</dbReference>
<dbReference type="InterPro" id="IPR020599">
    <property type="entry name" value="Transl_elong_fac_P/YeiP"/>
</dbReference>
<dbReference type="InterPro" id="IPR013185">
    <property type="entry name" value="Transl_elong_KOW-like"/>
</dbReference>
<dbReference type="InterPro" id="IPR001059">
    <property type="entry name" value="Transl_elong_P/YeiP_cen"/>
</dbReference>
<dbReference type="InterPro" id="IPR013852">
    <property type="entry name" value="Transl_elong_P/YeiP_CS"/>
</dbReference>
<dbReference type="InterPro" id="IPR011768">
    <property type="entry name" value="Transl_elongation_fac_P"/>
</dbReference>
<dbReference type="InterPro" id="IPR008991">
    <property type="entry name" value="Translation_prot_SH3-like_sf"/>
</dbReference>
<dbReference type="NCBIfam" id="TIGR00038">
    <property type="entry name" value="efp"/>
    <property type="match status" value="1"/>
</dbReference>
<dbReference type="NCBIfam" id="NF001810">
    <property type="entry name" value="PRK00529.1"/>
    <property type="match status" value="1"/>
</dbReference>
<dbReference type="PANTHER" id="PTHR30053">
    <property type="entry name" value="ELONGATION FACTOR P"/>
    <property type="match status" value="1"/>
</dbReference>
<dbReference type="PANTHER" id="PTHR30053:SF12">
    <property type="entry name" value="ELONGATION FACTOR P (EF-P) FAMILY PROTEIN"/>
    <property type="match status" value="1"/>
</dbReference>
<dbReference type="Pfam" id="PF01132">
    <property type="entry name" value="EFP"/>
    <property type="match status" value="1"/>
</dbReference>
<dbReference type="Pfam" id="PF08207">
    <property type="entry name" value="EFP_N"/>
    <property type="match status" value="1"/>
</dbReference>
<dbReference type="Pfam" id="PF09285">
    <property type="entry name" value="Elong-fact-P_C"/>
    <property type="match status" value="1"/>
</dbReference>
<dbReference type="PIRSF" id="PIRSF005901">
    <property type="entry name" value="EF-P"/>
    <property type="match status" value="1"/>
</dbReference>
<dbReference type="SMART" id="SM01185">
    <property type="entry name" value="EFP"/>
    <property type="match status" value="1"/>
</dbReference>
<dbReference type="SMART" id="SM00841">
    <property type="entry name" value="Elong-fact-P_C"/>
    <property type="match status" value="1"/>
</dbReference>
<dbReference type="SUPFAM" id="SSF50249">
    <property type="entry name" value="Nucleic acid-binding proteins"/>
    <property type="match status" value="2"/>
</dbReference>
<dbReference type="SUPFAM" id="SSF50104">
    <property type="entry name" value="Translation proteins SH3-like domain"/>
    <property type="match status" value="1"/>
</dbReference>
<dbReference type="PROSITE" id="PS01275">
    <property type="entry name" value="EFP"/>
    <property type="match status" value="1"/>
</dbReference>
<accession>B1XDQ0</accession>
<protein>
    <recommendedName>
        <fullName evidence="1">Elongation factor P</fullName>
        <shortName evidence="1">EF-P</shortName>
    </recommendedName>
</protein>
<feature type="chain" id="PRO_1000096151" description="Elongation factor P">
    <location>
        <begin position="1"/>
        <end position="188"/>
    </location>
</feature>
<feature type="modified residue" description="N6-(3,6-diaminohexanoyl)-5-hydroxylysine" evidence="1">
    <location>
        <position position="34"/>
    </location>
</feature>